<sequence length="17" mass="1726">GCCSHPACNVNNPHICG</sequence>
<feature type="peptide" id="PRO_0000247849" description="Alpha-conotoxin OmIA" evidence="3">
    <location>
        <begin position="1"/>
        <end position="17"/>
    </location>
</feature>
<feature type="region of interest" description="Ser-Xaa-Pro motif, crucial for potent interaction with nAChR" evidence="1">
    <location>
        <begin position="4"/>
        <end position="6"/>
    </location>
</feature>
<feature type="site" description="Key residue for the high potency for alpha-7 nAChRs" evidence="10">
    <location>
        <position position="5"/>
    </location>
</feature>
<feature type="site" description="Key residue for the high potency for alpha-7 nAChRs" evidence="10">
    <location>
        <position position="10"/>
    </location>
</feature>
<feature type="site" description="Key residue for the high potency for alpha-7 nAChRs" evidence="10">
    <location>
        <position position="11"/>
    </location>
</feature>
<feature type="modified residue" description="Glycine amide" evidence="2 3">
    <location>
        <position position="17"/>
    </location>
</feature>
<feature type="disulfide bond" evidence="2 3 11">
    <location>
        <begin position="2"/>
        <end position="8"/>
    </location>
</feature>
<feature type="disulfide bond" evidence="2 3 11">
    <location>
        <begin position="3"/>
        <end position="16"/>
    </location>
</feature>
<feature type="mutagenesis site" description="Important decrease in ability to inhibit alpha-7 nAChRs." evidence="5">
    <original>H</original>
    <variation>R</variation>
    <location>
        <position position="5"/>
    </location>
</feature>
<feature type="mutagenesis site" description="Moderate decrease in ability to inhibit alpha-7 nAChRs." evidence="5">
    <original>N</original>
    <variation>H</variation>
    <location>
        <position position="9"/>
    </location>
</feature>
<feature type="mutagenesis site" description="No change in ability to inhibit alpha-7 and alpha-3-beta-4 nAChRs." evidence="5">
    <original>V</original>
    <variation>A</variation>
    <location>
        <position position="10"/>
    </location>
</feature>
<feature type="mutagenesis site" description="Very important decrease in ability to inhibit alpha-7 nAChRs, and moderate decrease in ability to inhibit alpha-3-beta-4 nAChRs." evidence="5">
    <original>V</original>
    <variation>E</variation>
    <location>
        <position position="10"/>
    </location>
</feature>
<feature type="mutagenesis site" description="Very important decrease in ability to inhibit alpha-7 nAChRs, and moderate decrease in ability to inhibit alpha-3-beta-4 nAChRs." evidence="5">
    <original>V</original>
    <variation>K</variation>
    <location>
        <position position="10"/>
    </location>
</feature>
<feature type="mutagenesis site" description="10-fold increase in ability to inhibit alpha-7 nAChRs, and slight decrease in ability to inhibit alpha-3-beta-4 nAChRs." evidence="5">
    <original>V</original>
    <variation>L</variation>
    <location>
        <position position="10"/>
    </location>
</feature>
<feature type="mutagenesis site" description="Moderate decrease in ability to inhibit alpha-7 nAChRs." evidence="5">
    <original>V</original>
    <variation>Q</variation>
    <location>
        <position position="10"/>
    </location>
</feature>
<feature type="mutagenesis site" description="3.4-fold decrease in ability to inhibit alpha-7 nAChRs, and moderate decrease in ability to inhibit alpha-3-beta-4 nAChRs." evidence="5">
    <original>V</original>
    <variation>T</variation>
    <location>
        <position position="10"/>
    </location>
</feature>
<feature type="mutagenesis site" description="Important decrease in ability to inhibit alpha-7 nAChRs." evidence="5">
    <original>N</original>
    <variation>D</variation>
    <location>
        <position position="11"/>
    </location>
</feature>
<feature type="helix" evidence="12">
    <location>
        <begin position="2"/>
        <end position="4"/>
    </location>
</feature>
<feature type="helix" evidence="12">
    <location>
        <begin position="6"/>
        <end position="11"/>
    </location>
</feature>
<feature type="turn" evidence="12">
    <location>
        <begin position="13"/>
        <end position="15"/>
    </location>
</feature>
<organism>
    <name type="scientific">Conus omaria</name>
    <name type="common">Omaria cone</name>
    <dbReference type="NCBI Taxonomy" id="89429"/>
    <lineage>
        <taxon>Eukaryota</taxon>
        <taxon>Metazoa</taxon>
        <taxon>Spiralia</taxon>
        <taxon>Lophotrochozoa</taxon>
        <taxon>Mollusca</taxon>
        <taxon>Gastropoda</taxon>
        <taxon>Caenogastropoda</taxon>
        <taxon>Neogastropoda</taxon>
        <taxon>Conoidea</taxon>
        <taxon>Conidae</taxon>
        <taxon>Conus</taxon>
        <taxon>Darioconus</taxon>
    </lineage>
</organism>
<protein>
    <recommendedName>
        <fullName evidence="6 7">Alpha-conotoxin OmIA</fullName>
    </recommendedName>
</protein>
<name>CA1A_CONOM</name>
<evidence type="ECO:0000250" key="1">
    <source>
        <dbReference type="UniProtKB" id="P56636"/>
    </source>
</evidence>
<evidence type="ECO:0000269" key="2">
    <source>
    </source>
</evidence>
<evidence type="ECO:0000269" key="3">
    <source>
    </source>
</evidence>
<evidence type="ECO:0000269" key="4">
    <source>
    </source>
</evidence>
<evidence type="ECO:0000269" key="5">
    <source>
    </source>
</evidence>
<evidence type="ECO:0000303" key="6">
    <source>
    </source>
</evidence>
<evidence type="ECO:0000303" key="7">
    <source>
    </source>
</evidence>
<evidence type="ECO:0000305" key="8"/>
<evidence type="ECO:0000305" key="9">
    <source>
    </source>
</evidence>
<evidence type="ECO:0000305" key="10">
    <source>
    </source>
</evidence>
<evidence type="ECO:0007744" key="11">
    <source>
        <dbReference type="PDB" id="2GCZ"/>
    </source>
</evidence>
<evidence type="ECO:0007829" key="12">
    <source>
        <dbReference type="PDB" id="7N43"/>
    </source>
</evidence>
<comment type="function">
    <text evidence="3 4 5">Alpha-conotoxins act on postsynaptic membranes, they bind to the nicotinic acetylcholine receptors (nAChR) and thus inhibit them. This toxin blocks alpha-3-beta-2/CHRNA3-CHRNB2 (IC(50)=11 nM), alpha-7/CHRNA7 (IC(50)=27.1-59 nM (rat)/ 290 nM (human)), alpha-3-beta-4/CHRNA3-CHRNB4 (IC(50)=160 nM), and alpha-6/alpha-3-beta-2-beta-3 (CHRNA6/CHRNA3-CHRNB2-CHRNB3) (IC(50)=201 nM) nAChR (PubMed:16803900, PubMed:30025921, PubMed:34955864). In the OmIA-AChBP complex, this toxin occupies all five binding pockets located between two adjacent subunits of the homopentamer (PubMed:34955864). Despite a competitive binding mode observed in the co-crystal structure, it displays functional insurmountable antagonism at alpha-7 and alpha-3-beta-4 nAChRs (PubMed:34955864). It also shows biphasic-inhibition at alpha-7 nAChRs in the presence of the positive allosteric modulator PNU120596, with a preference for the high-affinity binding site following prolonged exposure (PubMed:34955864).</text>
</comment>
<comment type="subcellular location">
    <subcellularLocation>
        <location evidence="3">Secreted</location>
    </subcellularLocation>
</comment>
<comment type="tissue specificity">
    <text evidence="9">Expressed by the venom duct.</text>
</comment>
<comment type="domain">
    <text evidence="8">The cysteine framework is I (CC-C-C). Alpha4/7 pattern.</text>
</comment>
<comment type="mass spectrometry" mass="1720.7" method="LSI" evidence="3"/>
<comment type="miscellaneous">
    <text evidence="3 5">Negative results: has no effect on alpha-1-beta-1-delta-epsilon/CHRNA1-CHRNB1-CHRND-CHRNE, alpha-2-beta-2/CHRNA2-CHRNB2, and alpha-4-beta-2/CHRNA4-CHRNB2 nAChRs (PubMed:16803900). Its activity on alpha-3-beta-4/CHRNA3-CHRNB4 nAChR is controversial, since Talley et al., 2006 report no activity, whereas Ho et al., 2021 report an inhibitory activity (PubMed:16803900, PubMed:34955864).</text>
</comment>
<comment type="similarity">
    <text evidence="8">Belongs to the conotoxin A superfamily.</text>
</comment>
<accession>P0C1R7</accession>
<dbReference type="PDB" id="2GCZ">
    <property type="method" value="NMR"/>
    <property type="chains" value="A=1-17"/>
</dbReference>
<dbReference type="PDB" id="7N43">
    <property type="method" value="X-ray"/>
    <property type="resolution" value="2.47 A"/>
    <property type="chains" value="F/G/H/I/J=1-17"/>
</dbReference>
<dbReference type="PDBsum" id="2GCZ"/>
<dbReference type="PDBsum" id="7N43"/>
<dbReference type="BMRB" id="P0C1R7"/>
<dbReference type="SMR" id="P0C1R7"/>
<dbReference type="ConoServer" id="6">
    <property type="toxin name" value="OmIA"/>
</dbReference>
<dbReference type="EvolutionaryTrace" id="P0C1R7"/>
<dbReference type="GO" id="GO:0005576">
    <property type="term" value="C:extracellular region"/>
    <property type="evidence" value="ECO:0007669"/>
    <property type="project" value="UniProtKB-SubCell"/>
</dbReference>
<dbReference type="GO" id="GO:0035792">
    <property type="term" value="C:host cell postsynaptic membrane"/>
    <property type="evidence" value="ECO:0007669"/>
    <property type="project" value="UniProtKB-KW"/>
</dbReference>
<dbReference type="GO" id="GO:0030550">
    <property type="term" value="F:acetylcholine receptor inhibitor activity"/>
    <property type="evidence" value="ECO:0007669"/>
    <property type="project" value="UniProtKB-KW"/>
</dbReference>
<dbReference type="GO" id="GO:0099106">
    <property type="term" value="F:ion channel regulator activity"/>
    <property type="evidence" value="ECO:0007669"/>
    <property type="project" value="UniProtKB-KW"/>
</dbReference>
<dbReference type="GO" id="GO:0090729">
    <property type="term" value="F:toxin activity"/>
    <property type="evidence" value="ECO:0007669"/>
    <property type="project" value="UniProtKB-KW"/>
</dbReference>
<dbReference type="InterPro" id="IPR009958">
    <property type="entry name" value="Conotoxin_a-typ"/>
</dbReference>
<dbReference type="InterPro" id="IPR018072">
    <property type="entry name" value="Conotoxin_a-typ_CS"/>
</dbReference>
<dbReference type="Pfam" id="PF07365">
    <property type="entry name" value="Toxin_8"/>
    <property type="match status" value="1"/>
</dbReference>
<dbReference type="PROSITE" id="PS60014">
    <property type="entry name" value="ALPHA_CONOTOXIN"/>
    <property type="match status" value="1"/>
</dbReference>
<proteinExistence type="evidence at protein level"/>
<keyword id="KW-0002">3D-structure</keyword>
<keyword id="KW-0008">Acetylcholine receptor inhibiting toxin</keyword>
<keyword id="KW-0027">Amidation</keyword>
<keyword id="KW-0903">Direct protein sequencing</keyword>
<keyword id="KW-1015">Disulfide bond</keyword>
<keyword id="KW-0872">Ion channel impairing toxin</keyword>
<keyword id="KW-0528">Neurotoxin</keyword>
<keyword id="KW-0629">Postsynaptic neurotoxin</keyword>
<keyword id="KW-0964">Secreted</keyword>
<keyword id="KW-0800">Toxin</keyword>
<reference key="1">
    <citation type="journal article" date="2006" name="J. Biol. Chem.">
        <title>Alpha-conotoxin OmIA is a potent ligand for the acetylcholine-binding protein as well as alpha3beta2 and alpha7 nicotinic acetylcholine receptors.</title>
        <authorList>
            <person name="Talley T.T."/>
            <person name="Olivera B.M."/>
            <person name="Han K.-H."/>
            <person name="Christensen S.B."/>
            <person name="Dowell C."/>
            <person name="Tsigelny I."/>
            <person name="Ho K.-Y."/>
            <person name="Taylor P."/>
            <person name="McIntosh J.M."/>
        </authorList>
    </citation>
    <scope>PROTEIN SEQUENCE</scope>
    <scope>FUNCTION</scope>
    <scope>SYNTHESIS</scope>
    <scope>AMIDATION AT GLY-17</scope>
    <scope>DISULFIDE BONDS</scope>
    <scope>MASS SPECTROMETRY</scope>
    <scope>SUBCELLULAR LOCATION</scope>
    <source>
        <tissue>Venom</tissue>
    </source>
</reference>
<reference key="2">
    <citation type="journal article" date="2018" name="Neuropharmacology">
        <title>Species specificity of rat and human alpha7 nicotinic acetylcholine receptors towards different classes of peptide and protein antagonists.</title>
        <authorList>
            <person name="Yu J."/>
            <person name="Zhu X."/>
            <person name="Zhang L."/>
            <person name="Kudryavtsev D."/>
            <person name="Kasheverov I."/>
            <person name="Lei Y."/>
            <person name="Zhangsun D."/>
            <person name="Tsetlin V."/>
            <person name="Luo S."/>
        </authorList>
    </citation>
    <scope>FUNCTION ON ALPHA-7/CHRNA7 NACHR</scope>
    <scope>SYNTHESIS</scope>
</reference>
<reference key="3">
    <citation type="journal article" date="2021" name="Front. Pharmacol.">
        <title>Unique pharmacological properties of alpha-conotoxin OmIA at alpha7 nAChRs.</title>
        <authorList>
            <person name="Ho T.N.T."/>
            <person name="Abraham N."/>
            <person name="Lewis R.J."/>
        </authorList>
    </citation>
    <scope>X-RAY CRYSTALLOGRAPHY (2.47 ANGSTROMS) IN COMPLEX WITH LYMNAE STAGNALIS ACETYLCHOLINE BINDING PROTEIN</scope>
    <scope>FUNCTION</scope>
    <scope>SYNTHESIS</scope>
    <scope>3D-STRUCTURE MODELING IN COMPLEX WITH ALPHA-7 NICOTINIC ACETYLCHOLINE RECEPTOR</scope>
    <scope>MUTAGENESIS OF HIS-5; ASN-9; VAL-10 AND ASN-11</scope>
</reference>
<reference key="4">
    <citation type="journal article" date="2006" name="Biochem. Biophys. Res. Commun.">
        <title>Solution conformation of a neuronal nicotinic acetylcholine receptor antagonist alpha-conotoxin OmIA that discriminates alpha3 vs. alpha6 nAChR subtypes.</title>
        <authorList>
            <person name="Chi S.-W."/>
            <person name="Kim D.-H."/>
            <person name="Olivera B.M."/>
            <person name="McIntosh J.M."/>
            <person name="Han K.-H."/>
        </authorList>
    </citation>
    <scope>STRUCTURE BY NMR</scope>
    <scope>SYNTHESIS</scope>
    <scope>AMIDATION AT GLY-17</scope>
    <scope>DISULFIDE BONDS</scope>
</reference>